<evidence type="ECO:0000255" key="1">
    <source>
        <dbReference type="HAMAP-Rule" id="MF_00303"/>
    </source>
</evidence>
<dbReference type="EC" id="5.2.1.8" evidence="1"/>
<dbReference type="EMBL" id="AP009484">
    <property type="protein sequence ID" value="BAH18016.1"/>
    <property type="molecule type" value="Genomic_DNA"/>
</dbReference>
<dbReference type="RefSeq" id="WP_012657214.1">
    <property type="nucleotide sequence ID" value="NC_011999.1"/>
</dbReference>
<dbReference type="SMR" id="B9E748"/>
<dbReference type="STRING" id="458233.MCCL_1309"/>
<dbReference type="KEGG" id="mcl:MCCL_1309"/>
<dbReference type="eggNOG" id="COG0544">
    <property type="taxonomic scope" value="Bacteria"/>
</dbReference>
<dbReference type="HOGENOM" id="CLU_033058_3_2_9"/>
<dbReference type="OrthoDB" id="9767721at2"/>
<dbReference type="Proteomes" id="UP000001383">
    <property type="component" value="Chromosome"/>
</dbReference>
<dbReference type="GO" id="GO:0005737">
    <property type="term" value="C:cytoplasm"/>
    <property type="evidence" value="ECO:0007669"/>
    <property type="project" value="UniProtKB-SubCell"/>
</dbReference>
<dbReference type="GO" id="GO:0003755">
    <property type="term" value="F:peptidyl-prolyl cis-trans isomerase activity"/>
    <property type="evidence" value="ECO:0007669"/>
    <property type="project" value="UniProtKB-UniRule"/>
</dbReference>
<dbReference type="GO" id="GO:0044183">
    <property type="term" value="F:protein folding chaperone"/>
    <property type="evidence" value="ECO:0007669"/>
    <property type="project" value="TreeGrafter"/>
</dbReference>
<dbReference type="GO" id="GO:0043022">
    <property type="term" value="F:ribosome binding"/>
    <property type="evidence" value="ECO:0007669"/>
    <property type="project" value="TreeGrafter"/>
</dbReference>
<dbReference type="GO" id="GO:0051083">
    <property type="term" value="P:'de novo' cotranslational protein folding"/>
    <property type="evidence" value="ECO:0007669"/>
    <property type="project" value="TreeGrafter"/>
</dbReference>
<dbReference type="GO" id="GO:0051301">
    <property type="term" value="P:cell division"/>
    <property type="evidence" value="ECO:0007669"/>
    <property type="project" value="UniProtKB-KW"/>
</dbReference>
<dbReference type="GO" id="GO:0061077">
    <property type="term" value="P:chaperone-mediated protein folding"/>
    <property type="evidence" value="ECO:0007669"/>
    <property type="project" value="TreeGrafter"/>
</dbReference>
<dbReference type="GO" id="GO:0015031">
    <property type="term" value="P:protein transport"/>
    <property type="evidence" value="ECO:0007669"/>
    <property type="project" value="UniProtKB-UniRule"/>
</dbReference>
<dbReference type="GO" id="GO:0043335">
    <property type="term" value="P:protein unfolding"/>
    <property type="evidence" value="ECO:0007669"/>
    <property type="project" value="TreeGrafter"/>
</dbReference>
<dbReference type="FunFam" id="3.10.50.40:FF:000001">
    <property type="entry name" value="Trigger factor"/>
    <property type="match status" value="1"/>
</dbReference>
<dbReference type="FunFam" id="3.30.70.1050:FF:000002">
    <property type="entry name" value="Trigger factor"/>
    <property type="match status" value="1"/>
</dbReference>
<dbReference type="Gene3D" id="3.10.50.40">
    <property type="match status" value="1"/>
</dbReference>
<dbReference type="Gene3D" id="3.30.70.1050">
    <property type="entry name" value="Trigger factor ribosome-binding domain"/>
    <property type="match status" value="1"/>
</dbReference>
<dbReference type="Gene3D" id="1.10.3120.10">
    <property type="entry name" value="Trigger factor, C-terminal domain"/>
    <property type="match status" value="1"/>
</dbReference>
<dbReference type="HAMAP" id="MF_00303">
    <property type="entry name" value="Trigger_factor_Tig"/>
    <property type="match status" value="1"/>
</dbReference>
<dbReference type="InterPro" id="IPR046357">
    <property type="entry name" value="PPIase_dom_sf"/>
</dbReference>
<dbReference type="InterPro" id="IPR001179">
    <property type="entry name" value="PPIase_FKBP_dom"/>
</dbReference>
<dbReference type="InterPro" id="IPR005215">
    <property type="entry name" value="Trig_fac"/>
</dbReference>
<dbReference type="InterPro" id="IPR008880">
    <property type="entry name" value="Trigger_fac_C"/>
</dbReference>
<dbReference type="InterPro" id="IPR037041">
    <property type="entry name" value="Trigger_fac_C_sf"/>
</dbReference>
<dbReference type="InterPro" id="IPR008881">
    <property type="entry name" value="Trigger_fac_ribosome-bd_bac"/>
</dbReference>
<dbReference type="InterPro" id="IPR036611">
    <property type="entry name" value="Trigger_fac_ribosome-bd_sf"/>
</dbReference>
<dbReference type="InterPro" id="IPR027304">
    <property type="entry name" value="Trigger_fact/SurA_dom_sf"/>
</dbReference>
<dbReference type="NCBIfam" id="TIGR00115">
    <property type="entry name" value="tig"/>
    <property type="match status" value="1"/>
</dbReference>
<dbReference type="PANTHER" id="PTHR30560">
    <property type="entry name" value="TRIGGER FACTOR CHAPERONE AND PEPTIDYL-PROLYL CIS/TRANS ISOMERASE"/>
    <property type="match status" value="1"/>
</dbReference>
<dbReference type="PANTHER" id="PTHR30560:SF3">
    <property type="entry name" value="TRIGGER FACTOR-LIKE PROTEIN TIG, CHLOROPLASTIC"/>
    <property type="match status" value="1"/>
</dbReference>
<dbReference type="Pfam" id="PF00254">
    <property type="entry name" value="FKBP_C"/>
    <property type="match status" value="1"/>
</dbReference>
<dbReference type="Pfam" id="PF05698">
    <property type="entry name" value="Trigger_C"/>
    <property type="match status" value="1"/>
</dbReference>
<dbReference type="Pfam" id="PF05697">
    <property type="entry name" value="Trigger_N"/>
    <property type="match status" value="1"/>
</dbReference>
<dbReference type="PIRSF" id="PIRSF003095">
    <property type="entry name" value="Trigger_factor"/>
    <property type="match status" value="1"/>
</dbReference>
<dbReference type="SUPFAM" id="SSF54534">
    <property type="entry name" value="FKBP-like"/>
    <property type="match status" value="1"/>
</dbReference>
<dbReference type="SUPFAM" id="SSF109998">
    <property type="entry name" value="Triger factor/SurA peptide-binding domain-like"/>
    <property type="match status" value="1"/>
</dbReference>
<dbReference type="SUPFAM" id="SSF102735">
    <property type="entry name" value="Trigger factor ribosome-binding domain"/>
    <property type="match status" value="1"/>
</dbReference>
<dbReference type="PROSITE" id="PS50059">
    <property type="entry name" value="FKBP_PPIASE"/>
    <property type="match status" value="1"/>
</dbReference>
<reference key="1">
    <citation type="journal article" date="2009" name="J. Bacteriol.">
        <title>Complete genome sequence of Macrococcus caseolyticus strain JCSCS5402, reflecting the ancestral genome of the human-pathogenic staphylococci.</title>
        <authorList>
            <person name="Baba T."/>
            <person name="Kuwahara-Arai K."/>
            <person name="Uchiyama I."/>
            <person name="Takeuchi F."/>
            <person name="Ito T."/>
            <person name="Hiramatsu K."/>
        </authorList>
    </citation>
    <scope>NUCLEOTIDE SEQUENCE [LARGE SCALE GENOMIC DNA]</scope>
    <source>
        <strain>JCSC5402</strain>
    </source>
</reference>
<sequence length="427" mass="47653">MSVKWEKQEGNEGVLTVTVPAEEVNAGLDKAFKKVVKQVNVPGFRKGKMPRPMFEQRFGVEALYQDALDFILPDAYAAAVEEAGINPVDRPEIDIEQMEKGKELIFTAKVTVEPEVELGDYKGLEVEKEDTEVTEEDLNKAIEADLARKAELVVKEEGEVAEGDVVNLDFDGYVNEEAFEGGKAEGYDLEIGSGQFIPGFEEQLVGTKVGDEKDVTVTFPEEYHAEELAGKEAVFKVKINEVKSKEVPELDDEMAKELDESVDSVDAYKEKYKKDLQEQKTLQAENNMKESLIAQAVENAKVDIPEAMINTELDRMMQEFEQRIAQQGLNLELYYQFSGQTEEQLKESMKADAEARVKTNLTLAAIAKAENIEISDTDVDAELSKMSEQFGLSVDDIKAALGNGEVLKDDLRIQKAIDVLVKESKEK</sequence>
<keyword id="KW-0131">Cell cycle</keyword>
<keyword id="KW-0132">Cell division</keyword>
<keyword id="KW-0143">Chaperone</keyword>
<keyword id="KW-0963">Cytoplasm</keyword>
<keyword id="KW-0413">Isomerase</keyword>
<keyword id="KW-1185">Reference proteome</keyword>
<keyword id="KW-0697">Rotamase</keyword>
<accession>B9E748</accession>
<proteinExistence type="inferred from homology"/>
<gene>
    <name evidence="1" type="primary">tig</name>
    <name type="ordered locus">MCCL_1309</name>
</gene>
<protein>
    <recommendedName>
        <fullName evidence="1">Trigger factor</fullName>
        <shortName evidence="1">TF</shortName>
        <ecNumber evidence="1">5.2.1.8</ecNumber>
    </recommendedName>
    <alternativeName>
        <fullName evidence="1">PPIase</fullName>
    </alternativeName>
</protein>
<feature type="chain" id="PRO_1000198164" description="Trigger factor">
    <location>
        <begin position="1"/>
        <end position="427"/>
    </location>
</feature>
<feature type="domain" description="PPIase FKBP-type" evidence="1">
    <location>
        <begin position="163"/>
        <end position="248"/>
    </location>
</feature>
<comment type="function">
    <text evidence="1">Involved in protein export. Acts as a chaperone by maintaining the newly synthesized protein in an open conformation. Functions as a peptidyl-prolyl cis-trans isomerase.</text>
</comment>
<comment type="catalytic activity">
    <reaction evidence="1">
        <text>[protein]-peptidylproline (omega=180) = [protein]-peptidylproline (omega=0)</text>
        <dbReference type="Rhea" id="RHEA:16237"/>
        <dbReference type="Rhea" id="RHEA-COMP:10747"/>
        <dbReference type="Rhea" id="RHEA-COMP:10748"/>
        <dbReference type="ChEBI" id="CHEBI:83833"/>
        <dbReference type="ChEBI" id="CHEBI:83834"/>
        <dbReference type="EC" id="5.2.1.8"/>
    </reaction>
</comment>
<comment type="subcellular location">
    <subcellularLocation>
        <location>Cytoplasm</location>
    </subcellularLocation>
    <text evidence="1">About half TF is bound to the ribosome near the polypeptide exit tunnel while the other half is free in the cytoplasm.</text>
</comment>
<comment type="domain">
    <text evidence="1">Consists of 3 domains; the N-terminus binds the ribosome, the middle domain has PPIase activity, while the C-terminus has intrinsic chaperone activity on its own.</text>
</comment>
<comment type="similarity">
    <text evidence="1">Belongs to the FKBP-type PPIase family. Tig subfamily.</text>
</comment>
<name>TIG_MACCJ</name>
<organism>
    <name type="scientific">Macrococcus caseolyticus (strain JCSC5402)</name>
    <name type="common">Macrococcoides caseolyticum</name>
    <dbReference type="NCBI Taxonomy" id="458233"/>
    <lineage>
        <taxon>Bacteria</taxon>
        <taxon>Bacillati</taxon>
        <taxon>Bacillota</taxon>
        <taxon>Bacilli</taxon>
        <taxon>Bacillales</taxon>
        <taxon>Staphylococcaceae</taxon>
        <taxon>Macrococcoides</taxon>
    </lineage>
</organism>